<organism>
    <name type="scientific">Mus musculus</name>
    <name type="common">Mouse</name>
    <dbReference type="NCBI Taxonomy" id="10090"/>
    <lineage>
        <taxon>Eukaryota</taxon>
        <taxon>Metazoa</taxon>
        <taxon>Chordata</taxon>
        <taxon>Craniata</taxon>
        <taxon>Vertebrata</taxon>
        <taxon>Euteleostomi</taxon>
        <taxon>Mammalia</taxon>
        <taxon>Eutheria</taxon>
        <taxon>Euarchontoglires</taxon>
        <taxon>Glires</taxon>
        <taxon>Rodentia</taxon>
        <taxon>Myomorpha</taxon>
        <taxon>Muroidea</taxon>
        <taxon>Muridae</taxon>
        <taxon>Murinae</taxon>
        <taxon>Mus</taxon>
        <taxon>Mus</taxon>
    </lineage>
</organism>
<reference key="1">
    <citation type="journal article" date="1997" name="J. Biol. Chem.">
        <title>Characterization of a novel mammalian RGS protein that binds to Galpha proteins and inhibits pheromone signaling in yeast.</title>
        <authorList>
            <person name="Chen C."/>
            <person name="Zheng B."/>
            <person name="Han J."/>
            <person name="Lin S.-C."/>
        </authorList>
    </citation>
    <scope>NUCLEOTIDE SEQUENCE [MRNA]</scope>
    <scope>TISSUE SPECIFICITY</scope>
</reference>
<reference key="2">
    <citation type="journal article" date="2000" name="J. Immunol.">
        <title>RGS molecule expression in murine B lymphocytes and ability to down-regulate chemotaxis to lymphoid chemokines.</title>
        <authorList>
            <person name="Reif K."/>
            <person name="Cyster J.G."/>
        </authorList>
    </citation>
    <scope>NUCLEOTIDE SEQUENCE [MRNA]</scope>
    <source>
        <strain>C57BL/6J</strain>
        <tissue>Embryo</tissue>
    </source>
</reference>
<reference key="3">
    <citation type="submission" date="2001-10" db="EMBL/GenBank/DDBJ databases">
        <title>Identification of novel endometrial and embryonic factors involved in mouse embryo implantation.</title>
        <authorList>
            <person name="Shen Q.-X."/>
            <person name="Wang J."/>
            <person name="Huang Z.-P."/>
        </authorList>
    </citation>
    <scope>NUCLEOTIDE SEQUENCE [MRNA]</scope>
    <source>
        <strain>BALB/cJ</strain>
    </source>
</reference>
<reference key="4">
    <citation type="journal article" date="2005" name="Science">
        <title>The transcriptional landscape of the mammalian genome.</title>
        <authorList>
            <person name="Carninci P."/>
            <person name="Kasukawa T."/>
            <person name="Katayama S."/>
            <person name="Gough J."/>
            <person name="Frith M.C."/>
            <person name="Maeda N."/>
            <person name="Oyama R."/>
            <person name="Ravasi T."/>
            <person name="Lenhard B."/>
            <person name="Wells C."/>
            <person name="Kodzius R."/>
            <person name="Shimokawa K."/>
            <person name="Bajic V.B."/>
            <person name="Brenner S.E."/>
            <person name="Batalov S."/>
            <person name="Forrest A.R."/>
            <person name="Zavolan M."/>
            <person name="Davis M.J."/>
            <person name="Wilming L.G."/>
            <person name="Aidinis V."/>
            <person name="Allen J.E."/>
            <person name="Ambesi-Impiombato A."/>
            <person name="Apweiler R."/>
            <person name="Aturaliya R.N."/>
            <person name="Bailey T.L."/>
            <person name="Bansal M."/>
            <person name="Baxter L."/>
            <person name="Beisel K.W."/>
            <person name="Bersano T."/>
            <person name="Bono H."/>
            <person name="Chalk A.M."/>
            <person name="Chiu K.P."/>
            <person name="Choudhary V."/>
            <person name="Christoffels A."/>
            <person name="Clutterbuck D.R."/>
            <person name="Crowe M.L."/>
            <person name="Dalla E."/>
            <person name="Dalrymple B.P."/>
            <person name="de Bono B."/>
            <person name="Della Gatta G."/>
            <person name="di Bernardo D."/>
            <person name="Down T."/>
            <person name="Engstrom P."/>
            <person name="Fagiolini M."/>
            <person name="Faulkner G."/>
            <person name="Fletcher C.F."/>
            <person name="Fukushima T."/>
            <person name="Furuno M."/>
            <person name="Futaki S."/>
            <person name="Gariboldi M."/>
            <person name="Georgii-Hemming P."/>
            <person name="Gingeras T.R."/>
            <person name="Gojobori T."/>
            <person name="Green R.E."/>
            <person name="Gustincich S."/>
            <person name="Harbers M."/>
            <person name="Hayashi Y."/>
            <person name="Hensch T.K."/>
            <person name="Hirokawa N."/>
            <person name="Hill D."/>
            <person name="Huminiecki L."/>
            <person name="Iacono M."/>
            <person name="Ikeo K."/>
            <person name="Iwama A."/>
            <person name="Ishikawa T."/>
            <person name="Jakt M."/>
            <person name="Kanapin A."/>
            <person name="Katoh M."/>
            <person name="Kawasawa Y."/>
            <person name="Kelso J."/>
            <person name="Kitamura H."/>
            <person name="Kitano H."/>
            <person name="Kollias G."/>
            <person name="Krishnan S.P."/>
            <person name="Kruger A."/>
            <person name="Kummerfeld S.K."/>
            <person name="Kurochkin I.V."/>
            <person name="Lareau L.F."/>
            <person name="Lazarevic D."/>
            <person name="Lipovich L."/>
            <person name="Liu J."/>
            <person name="Liuni S."/>
            <person name="McWilliam S."/>
            <person name="Madan Babu M."/>
            <person name="Madera M."/>
            <person name="Marchionni L."/>
            <person name="Matsuda H."/>
            <person name="Matsuzawa S."/>
            <person name="Miki H."/>
            <person name="Mignone F."/>
            <person name="Miyake S."/>
            <person name="Morris K."/>
            <person name="Mottagui-Tabar S."/>
            <person name="Mulder N."/>
            <person name="Nakano N."/>
            <person name="Nakauchi H."/>
            <person name="Ng P."/>
            <person name="Nilsson R."/>
            <person name="Nishiguchi S."/>
            <person name="Nishikawa S."/>
            <person name="Nori F."/>
            <person name="Ohara O."/>
            <person name="Okazaki Y."/>
            <person name="Orlando V."/>
            <person name="Pang K.C."/>
            <person name="Pavan W.J."/>
            <person name="Pavesi G."/>
            <person name="Pesole G."/>
            <person name="Petrovsky N."/>
            <person name="Piazza S."/>
            <person name="Reed J."/>
            <person name="Reid J.F."/>
            <person name="Ring B.Z."/>
            <person name="Ringwald M."/>
            <person name="Rost B."/>
            <person name="Ruan Y."/>
            <person name="Salzberg S.L."/>
            <person name="Sandelin A."/>
            <person name="Schneider C."/>
            <person name="Schoenbach C."/>
            <person name="Sekiguchi K."/>
            <person name="Semple C.A."/>
            <person name="Seno S."/>
            <person name="Sessa L."/>
            <person name="Sheng Y."/>
            <person name="Shibata Y."/>
            <person name="Shimada H."/>
            <person name="Shimada K."/>
            <person name="Silva D."/>
            <person name="Sinclair B."/>
            <person name="Sperling S."/>
            <person name="Stupka E."/>
            <person name="Sugiura K."/>
            <person name="Sultana R."/>
            <person name="Takenaka Y."/>
            <person name="Taki K."/>
            <person name="Tammoja K."/>
            <person name="Tan S.L."/>
            <person name="Tang S."/>
            <person name="Taylor M.S."/>
            <person name="Tegner J."/>
            <person name="Teichmann S.A."/>
            <person name="Ueda H.R."/>
            <person name="van Nimwegen E."/>
            <person name="Verardo R."/>
            <person name="Wei C.L."/>
            <person name="Yagi K."/>
            <person name="Yamanishi H."/>
            <person name="Zabarovsky E."/>
            <person name="Zhu S."/>
            <person name="Zimmer A."/>
            <person name="Hide W."/>
            <person name="Bult C."/>
            <person name="Grimmond S.M."/>
            <person name="Teasdale R.D."/>
            <person name="Liu E.T."/>
            <person name="Brusic V."/>
            <person name="Quackenbush J."/>
            <person name="Wahlestedt C."/>
            <person name="Mattick J.S."/>
            <person name="Hume D.A."/>
            <person name="Kai C."/>
            <person name="Sasaki D."/>
            <person name="Tomaru Y."/>
            <person name="Fukuda S."/>
            <person name="Kanamori-Katayama M."/>
            <person name="Suzuki M."/>
            <person name="Aoki J."/>
            <person name="Arakawa T."/>
            <person name="Iida J."/>
            <person name="Imamura K."/>
            <person name="Itoh M."/>
            <person name="Kato T."/>
            <person name="Kawaji H."/>
            <person name="Kawagashira N."/>
            <person name="Kawashima T."/>
            <person name="Kojima M."/>
            <person name="Kondo S."/>
            <person name="Konno H."/>
            <person name="Nakano K."/>
            <person name="Ninomiya N."/>
            <person name="Nishio T."/>
            <person name="Okada M."/>
            <person name="Plessy C."/>
            <person name="Shibata K."/>
            <person name="Shiraki T."/>
            <person name="Suzuki S."/>
            <person name="Tagami M."/>
            <person name="Waki K."/>
            <person name="Watahiki A."/>
            <person name="Okamura-Oho Y."/>
            <person name="Suzuki H."/>
            <person name="Kawai J."/>
            <person name="Hayashizaki Y."/>
        </authorList>
    </citation>
    <scope>NUCLEOTIDE SEQUENCE [LARGE SCALE MRNA]</scope>
    <source>
        <strain>C57BL/6J</strain>
        <tissue>Testis</tissue>
    </source>
</reference>
<reference key="5">
    <citation type="journal article" date="2004" name="Genome Res.">
        <title>The status, quality, and expansion of the NIH full-length cDNA project: the Mammalian Gene Collection (MGC).</title>
        <authorList>
            <consortium name="The MGC Project Team"/>
        </authorList>
    </citation>
    <scope>NUCLEOTIDE SEQUENCE [LARGE SCALE MRNA]</scope>
    <source>
        <strain>C57BL/6J</strain>
        <tissue>Retina</tissue>
    </source>
</reference>
<reference key="6">
    <citation type="journal article" date="2003" name="Nat. Med.">
        <title>Regulator of G-protein signaling-2 mediates vascular smooth muscle relaxation and blood pressure.</title>
        <authorList>
            <person name="Tang K.M."/>
            <person name="Wang G.R."/>
            <person name="Lu P."/>
            <person name="Karas R.H."/>
            <person name="Aronovitz M."/>
            <person name="Heximer S.P."/>
            <person name="Kaltenbronn K.M."/>
            <person name="Blumer K.J."/>
            <person name="Siderovski D.P."/>
            <person name="Zhu Y."/>
            <person name="Mendelsohn M.E."/>
        </authorList>
    </citation>
    <scope>FUNCTION</scope>
    <scope>DISRUPTION PHENOTYPE</scope>
</reference>
<keyword id="KW-0131">Cell cycle</keyword>
<keyword id="KW-1003">Cell membrane</keyword>
<keyword id="KW-0963">Cytoplasm</keyword>
<keyword id="KW-0343">GTPase activation</keyword>
<keyword id="KW-0472">Membrane</keyword>
<keyword id="KW-0539">Nucleus</keyword>
<keyword id="KW-0597">Phosphoprotein</keyword>
<keyword id="KW-1185">Reference proteome</keyword>
<keyword id="KW-0734">Signal transduction inhibitor</keyword>
<keyword id="KW-0810">Translation regulation</keyword>
<feature type="chain" id="PRO_0000204179" description="Regulator of G-protein signaling 2">
    <location>
        <begin position="1"/>
        <end position="211"/>
    </location>
</feature>
<feature type="domain" description="RGS" evidence="2">
    <location>
        <begin position="83"/>
        <end position="199"/>
    </location>
</feature>
<feature type="region of interest" description="Necessary for membrane association" evidence="1">
    <location>
        <begin position="32"/>
        <end position="66"/>
    </location>
</feature>
<feature type="region of interest" description="Necessary to inhibit protein synthesis" evidence="1">
    <location>
        <begin position="79"/>
        <end position="116"/>
    </location>
</feature>
<feature type="sequence conflict" description="In Ref. 1; AAB50617." evidence="5" ref="1">
    <original>KD</original>
    <variation>NH</variation>
    <location>
        <begin position="39"/>
        <end position="40"/>
    </location>
</feature>
<feature type="sequence conflict" description="In Ref. 3; AAL28114." evidence="5" ref="3">
    <original>QL</original>
    <variation>DV</variation>
    <location>
        <begin position="78"/>
        <end position="79"/>
    </location>
</feature>
<feature type="sequence conflict" description="In Ref. 1; AAB50617." evidence="5" ref="1">
    <original>QL</original>
    <variation>HV</variation>
    <location>
        <begin position="78"/>
        <end position="79"/>
    </location>
</feature>
<evidence type="ECO:0000250" key="1">
    <source>
        <dbReference type="UniProtKB" id="P41220"/>
    </source>
</evidence>
<evidence type="ECO:0000255" key="2">
    <source>
        <dbReference type="PROSITE-ProRule" id="PRU00171"/>
    </source>
</evidence>
<evidence type="ECO:0000269" key="3">
    <source>
    </source>
</evidence>
<evidence type="ECO:0000269" key="4">
    <source>
    </source>
</evidence>
<evidence type="ECO:0000305" key="5"/>
<sequence length="211" mass="24294">MQSAMFLAVQHDCVPMDKSAGNGPKVEEKREKMKRTLLKDWKTRLSYFLQNSSAPGKPKTGKKSKQQTFIKPSPEEAQLWAEAFDELLASKYGLAAFRAFLKSEFCEENIEFWLACEDFKKTKSPQKLSSKARKIYTDFIEKEAPKEINIDFQTKSLIAQNIQEATSGCFTTAQKRVYSLMENNSYPRFLESEFYQDLCKKPQITTEPHAT</sequence>
<proteinExistence type="evidence at transcript level"/>
<gene>
    <name type="primary">Rgs2</name>
</gene>
<protein>
    <recommendedName>
        <fullName>Regulator of G-protein signaling 2</fullName>
        <shortName>RGS2</shortName>
    </recommendedName>
</protein>
<accession>O08849</accession>
<accession>Q544S7</accession>
<accession>Q91WX1</accession>
<accession>Q9JL24</accession>
<comment type="function">
    <text evidence="1 3">Regulates G protein-coupled receptor signaling cascades. Inhibits signal transduction by increasing the GTPase activity of G protein alpha subunits, thereby driving them into their inactive GDP-bound form (By similarity). It is involved in the negative regulation of the angiotensin-activated signaling pathway (By similarity). Plays a role in the regulation of blood pressure in response to signaling via G protein-coupled receptors and GNAQ. Plays a role in regulating the constriction and relaxation of vascular smooth muscle (PubMed:14608379). Binds EIF2B5 and blocks its activity, thereby inhibiting the translation of mRNA into protein (By similarity).</text>
</comment>
<comment type="subunit">
    <text evidence="1">Interacts with GNAQ. Does not interact with GNAI1 and GNAI3. Interacts with EIF2B5. Interacts with PRKG1 (isoform alpha).</text>
</comment>
<comment type="subcellular location">
    <subcellularLocation>
        <location evidence="1">Cell membrane</location>
    </subcellularLocation>
    <subcellularLocation>
        <location evidence="1">Cytoplasm</location>
    </subcellularLocation>
    <subcellularLocation>
        <location evidence="1">Nucleus</location>
        <location evidence="1">Nucleolus</location>
    </subcellularLocation>
</comment>
<comment type="tissue specificity">
    <text evidence="4">Expressed in a wide variety of tissues.</text>
</comment>
<comment type="PTM">
    <text evidence="1">Phosphorylated by protein kinase C. Phosphorylation by PRKG1 leads to activation of RGS2 activity.</text>
</comment>
<comment type="disruption phenotype">
    <text evidence="3">Mutant mice display increased blood pressure and impaired relaxation of vascular smooth muscle.</text>
</comment>
<name>RGS2_MOUSE</name>
<dbReference type="EMBL" id="U67187">
    <property type="protein sequence ID" value="AAB50617.1"/>
    <property type="molecule type" value="mRNA"/>
</dbReference>
<dbReference type="EMBL" id="AF215668">
    <property type="protein sequence ID" value="AAF34625.1"/>
    <property type="molecule type" value="mRNA"/>
</dbReference>
<dbReference type="EMBL" id="AF432916">
    <property type="protein sequence ID" value="AAL28114.1"/>
    <property type="molecule type" value="mRNA"/>
</dbReference>
<dbReference type="EMBL" id="AK031603">
    <property type="protein sequence ID" value="BAC27471.1"/>
    <property type="molecule type" value="mRNA"/>
</dbReference>
<dbReference type="EMBL" id="AK077922">
    <property type="protein sequence ID" value="BAC37065.1"/>
    <property type="molecule type" value="mRNA"/>
</dbReference>
<dbReference type="EMBL" id="AK162276">
    <property type="protein sequence ID" value="BAE36830.1"/>
    <property type="molecule type" value="mRNA"/>
</dbReference>
<dbReference type="EMBL" id="BC023001">
    <property type="protein sequence ID" value="AAH23001.1"/>
    <property type="molecule type" value="mRNA"/>
</dbReference>
<dbReference type="CCDS" id="CCDS15347.1"/>
<dbReference type="RefSeq" id="NP_033087.2">
    <property type="nucleotide sequence ID" value="NM_009061.4"/>
</dbReference>
<dbReference type="SMR" id="O08849"/>
<dbReference type="BioGRID" id="202883">
    <property type="interactions" value="2"/>
</dbReference>
<dbReference type="FunCoup" id="O08849">
    <property type="interactions" value="2028"/>
</dbReference>
<dbReference type="IntAct" id="O08849">
    <property type="interactions" value="2"/>
</dbReference>
<dbReference type="MINT" id="O08849"/>
<dbReference type="STRING" id="10090.ENSMUSP00000115558"/>
<dbReference type="iPTMnet" id="O08849"/>
<dbReference type="PhosphoSitePlus" id="O08849"/>
<dbReference type="PaxDb" id="10090-ENSMUSP00000115558"/>
<dbReference type="ProteomicsDB" id="255253"/>
<dbReference type="Pumba" id="O08849"/>
<dbReference type="Antibodypedia" id="34461">
    <property type="antibodies" value="281 antibodies from 29 providers"/>
</dbReference>
<dbReference type="DNASU" id="19735"/>
<dbReference type="Ensembl" id="ENSMUST00000127206.8">
    <property type="protein sequence ID" value="ENSMUSP00000115558.2"/>
    <property type="gene ID" value="ENSMUSG00000026360.10"/>
</dbReference>
<dbReference type="GeneID" id="19735"/>
<dbReference type="KEGG" id="mmu:19735"/>
<dbReference type="UCSC" id="uc007cxg.2">
    <property type="organism name" value="mouse"/>
</dbReference>
<dbReference type="AGR" id="MGI:1098271"/>
<dbReference type="CTD" id="5997"/>
<dbReference type="MGI" id="MGI:1098271">
    <property type="gene designation" value="Rgs2"/>
</dbReference>
<dbReference type="VEuPathDB" id="HostDB:ENSMUSG00000026360"/>
<dbReference type="eggNOG" id="KOG3589">
    <property type="taxonomic scope" value="Eukaryota"/>
</dbReference>
<dbReference type="GeneTree" id="ENSGT00940000157937"/>
<dbReference type="HOGENOM" id="CLU_059863_3_2_1"/>
<dbReference type="InParanoid" id="O08849"/>
<dbReference type="OMA" id="GRMKRTI"/>
<dbReference type="OrthoDB" id="196547at2759"/>
<dbReference type="PhylomeDB" id="O08849"/>
<dbReference type="TreeFam" id="TF315837"/>
<dbReference type="Reactome" id="R-MMU-416476">
    <property type="pathway name" value="G alpha (q) signalling events"/>
</dbReference>
<dbReference type="BioGRID-ORCS" id="19735">
    <property type="hits" value="3 hits in 76 CRISPR screens"/>
</dbReference>
<dbReference type="ChiTaRS" id="Rgs2">
    <property type="organism name" value="mouse"/>
</dbReference>
<dbReference type="PRO" id="PR:O08849"/>
<dbReference type="Proteomes" id="UP000000589">
    <property type="component" value="Chromosome 1"/>
</dbReference>
<dbReference type="RNAct" id="O08849">
    <property type="molecule type" value="protein"/>
</dbReference>
<dbReference type="Bgee" id="ENSMUSG00000026360">
    <property type="expression patterns" value="Expressed in cumulus cell and 277 other cell types or tissues"/>
</dbReference>
<dbReference type="ExpressionAtlas" id="O08849">
    <property type="expression patterns" value="baseline and differential"/>
</dbReference>
<dbReference type="GO" id="GO:0005737">
    <property type="term" value="C:cytoplasm"/>
    <property type="evidence" value="ECO:0000250"/>
    <property type="project" value="UniProtKB"/>
</dbReference>
<dbReference type="GO" id="GO:0009898">
    <property type="term" value="C:cytoplasmic side of plasma membrane"/>
    <property type="evidence" value="ECO:0000314"/>
    <property type="project" value="BHF-UCL"/>
</dbReference>
<dbReference type="GO" id="GO:0005829">
    <property type="term" value="C:cytosol"/>
    <property type="evidence" value="ECO:0000315"/>
    <property type="project" value="BHF-UCL"/>
</dbReference>
<dbReference type="GO" id="GO:0005730">
    <property type="term" value="C:nucleolus"/>
    <property type="evidence" value="ECO:0007669"/>
    <property type="project" value="UniProtKB-SubCell"/>
</dbReference>
<dbReference type="GO" id="GO:0005634">
    <property type="term" value="C:nucleus"/>
    <property type="evidence" value="ECO:0000250"/>
    <property type="project" value="UniProtKB"/>
</dbReference>
<dbReference type="GO" id="GO:0005886">
    <property type="term" value="C:plasma membrane"/>
    <property type="evidence" value="ECO:0000315"/>
    <property type="project" value="BHF-UCL"/>
</dbReference>
<dbReference type="GO" id="GO:0010855">
    <property type="term" value="F:adenylate cyclase inhibitor activity"/>
    <property type="evidence" value="ECO:0000315"/>
    <property type="project" value="MGI"/>
</dbReference>
<dbReference type="GO" id="GO:0048487">
    <property type="term" value="F:beta-tubulin binding"/>
    <property type="evidence" value="ECO:0007669"/>
    <property type="project" value="Ensembl"/>
</dbReference>
<dbReference type="GO" id="GO:0001965">
    <property type="term" value="F:G-protein alpha-subunit binding"/>
    <property type="evidence" value="ECO:0007669"/>
    <property type="project" value="Ensembl"/>
</dbReference>
<dbReference type="GO" id="GO:0005096">
    <property type="term" value="F:GTPase activator activity"/>
    <property type="evidence" value="ECO:0000250"/>
    <property type="project" value="UniProtKB"/>
</dbReference>
<dbReference type="GO" id="GO:0050873">
    <property type="term" value="P:brown fat cell differentiation"/>
    <property type="evidence" value="ECO:0000314"/>
    <property type="project" value="MGI"/>
</dbReference>
<dbReference type="GO" id="GO:0007186">
    <property type="term" value="P:G protein-coupled receptor signaling pathway"/>
    <property type="evidence" value="ECO:0000304"/>
    <property type="project" value="MGI"/>
</dbReference>
<dbReference type="GO" id="GO:0060135">
    <property type="term" value="P:maternal process involved in female pregnancy"/>
    <property type="evidence" value="ECO:0007669"/>
    <property type="project" value="Ensembl"/>
</dbReference>
<dbReference type="GO" id="GO:0010614">
    <property type="term" value="P:negative regulation of cardiac muscle hypertrophy"/>
    <property type="evidence" value="ECO:0000315"/>
    <property type="project" value="BHF-UCL"/>
</dbReference>
<dbReference type="GO" id="GO:0061052">
    <property type="term" value="P:negative regulation of cell growth involved in cardiac muscle cell development"/>
    <property type="evidence" value="ECO:0007669"/>
    <property type="project" value="Ensembl"/>
</dbReference>
<dbReference type="GO" id="GO:0045744">
    <property type="term" value="P:negative regulation of G protein-coupled receptor signaling pathway"/>
    <property type="evidence" value="ECO:0000315"/>
    <property type="project" value="BHF-UCL"/>
</dbReference>
<dbReference type="GO" id="GO:1900924">
    <property type="term" value="P:negative regulation of glycine import across plasma membrane"/>
    <property type="evidence" value="ECO:0007669"/>
    <property type="project" value="Ensembl"/>
</dbReference>
<dbReference type="GO" id="GO:0046329">
    <property type="term" value="P:negative regulation of JNK cascade"/>
    <property type="evidence" value="ECO:0000315"/>
    <property type="project" value="BHF-UCL"/>
</dbReference>
<dbReference type="GO" id="GO:0017148">
    <property type="term" value="P:negative regulation of translation"/>
    <property type="evidence" value="ECO:0007669"/>
    <property type="project" value="Ensembl"/>
</dbReference>
<dbReference type="GO" id="GO:0060452">
    <property type="term" value="P:positive regulation of cardiac muscle contraction"/>
    <property type="evidence" value="ECO:0000315"/>
    <property type="project" value="BHF-UCL"/>
</dbReference>
<dbReference type="GO" id="GO:0010976">
    <property type="term" value="P:positive regulation of neuron projection development"/>
    <property type="evidence" value="ECO:0007669"/>
    <property type="project" value="Ensembl"/>
</dbReference>
<dbReference type="GO" id="GO:1900738">
    <property type="term" value="P:positive regulation of phospholipase C-activating G protein-coupled receptor signaling pathway"/>
    <property type="evidence" value="ECO:0000315"/>
    <property type="project" value="BHF-UCL"/>
</dbReference>
<dbReference type="GO" id="GO:0071877">
    <property type="term" value="P:regulation of adenylate cyclase-inhibiting adrenergic receptor signaling pathway"/>
    <property type="evidence" value="ECO:0000315"/>
    <property type="project" value="BHF-UCL"/>
</dbReference>
<dbReference type="GO" id="GO:0055119">
    <property type="term" value="P:relaxation of cardiac muscle"/>
    <property type="evidence" value="ECO:0000315"/>
    <property type="project" value="BHF-UCL"/>
</dbReference>
<dbReference type="GO" id="GO:0060087">
    <property type="term" value="P:relaxation of vascular associated smooth muscle"/>
    <property type="evidence" value="ECO:0000315"/>
    <property type="project" value="UniProtKB"/>
</dbReference>
<dbReference type="GO" id="GO:0001975">
    <property type="term" value="P:response to amphetamine"/>
    <property type="evidence" value="ECO:0007669"/>
    <property type="project" value="Ensembl"/>
</dbReference>
<dbReference type="GO" id="GO:0045471">
    <property type="term" value="P:response to ethanol"/>
    <property type="evidence" value="ECO:0007669"/>
    <property type="project" value="Ensembl"/>
</dbReference>
<dbReference type="GO" id="GO:0007283">
    <property type="term" value="P:spermatogenesis"/>
    <property type="evidence" value="ECO:0000270"/>
    <property type="project" value="BHF-UCL"/>
</dbReference>
<dbReference type="CDD" id="cd08709">
    <property type="entry name" value="RGS_RGS2"/>
    <property type="match status" value="1"/>
</dbReference>
<dbReference type="FunFam" id="1.10.167.10:FF:000001">
    <property type="entry name" value="Putative regulator of g-protein signaling 12"/>
    <property type="match status" value="1"/>
</dbReference>
<dbReference type="FunFam" id="1.10.196.10:FF:000001">
    <property type="entry name" value="Regulator of G-protein signaling 8"/>
    <property type="match status" value="1"/>
</dbReference>
<dbReference type="Gene3D" id="1.10.196.10">
    <property type="match status" value="1"/>
</dbReference>
<dbReference type="Gene3D" id="1.10.167.10">
    <property type="entry name" value="Regulator of G-protein Signalling 4, domain 2"/>
    <property type="match status" value="1"/>
</dbReference>
<dbReference type="InterPro" id="IPR016137">
    <property type="entry name" value="RGS"/>
</dbReference>
<dbReference type="InterPro" id="IPR034947">
    <property type="entry name" value="RGS2_RGS"/>
</dbReference>
<dbReference type="InterPro" id="IPR036305">
    <property type="entry name" value="RGS_sf"/>
</dbReference>
<dbReference type="InterPro" id="IPR024066">
    <property type="entry name" value="RGS_subdom1/3"/>
</dbReference>
<dbReference type="InterPro" id="IPR044926">
    <property type="entry name" value="RGS_subdomain_2"/>
</dbReference>
<dbReference type="PANTHER" id="PTHR10845">
    <property type="entry name" value="REGULATOR OF G PROTEIN SIGNALING"/>
    <property type="match status" value="1"/>
</dbReference>
<dbReference type="PANTHER" id="PTHR10845:SF43">
    <property type="entry name" value="REGULATOR OF G-PROTEIN SIGNALING 2"/>
    <property type="match status" value="1"/>
</dbReference>
<dbReference type="Pfam" id="PF00615">
    <property type="entry name" value="RGS"/>
    <property type="match status" value="1"/>
</dbReference>
<dbReference type="PRINTS" id="PR01301">
    <property type="entry name" value="RGSPROTEIN"/>
</dbReference>
<dbReference type="SMART" id="SM00315">
    <property type="entry name" value="RGS"/>
    <property type="match status" value="1"/>
</dbReference>
<dbReference type="SUPFAM" id="SSF48097">
    <property type="entry name" value="Regulator of G-protein signaling, RGS"/>
    <property type="match status" value="1"/>
</dbReference>
<dbReference type="PROSITE" id="PS50132">
    <property type="entry name" value="RGS"/>
    <property type="match status" value="1"/>
</dbReference>